<comment type="function">
    <text evidence="1">Converts GTP to 7,8-dihydroneopterin triphosphate.</text>
</comment>
<comment type="catalytic activity">
    <reaction evidence="1">
        <text>GTP + H2O = 7,8-dihydroneopterin 3'-triphosphate + formate + H(+)</text>
        <dbReference type="Rhea" id="RHEA:17473"/>
        <dbReference type="ChEBI" id="CHEBI:15377"/>
        <dbReference type="ChEBI" id="CHEBI:15378"/>
        <dbReference type="ChEBI" id="CHEBI:15740"/>
        <dbReference type="ChEBI" id="CHEBI:37565"/>
        <dbReference type="ChEBI" id="CHEBI:58462"/>
        <dbReference type="EC" id="3.5.4.16"/>
    </reaction>
</comment>
<comment type="pathway">
    <text evidence="1">Cofactor biosynthesis; 7,8-dihydroneopterin triphosphate biosynthesis; 7,8-dihydroneopterin triphosphate from GTP: step 1/1.</text>
</comment>
<comment type="similarity">
    <text evidence="1">Belongs to the GTP cyclohydrolase IV family.</text>
</comment>
<protein>
    <recommendedName>
        <fullName evidence="1">GTP cyclohydrolase FolE2</fullName>
        <ecNumber evidence="1">3.5.4.16</ecNumber>
    </recommendedName>
</protein>
<reference key="1">
    <citation type="journal article" date="2003" name="Nat. Genet.">
        <title>Comparative analysis of the genome sequences of Bordetella pertussis, Bordetella parapertussis and Bordetella bronchiseptica.</title>
        <authorList>
            <person name="Parkhill J."/>
            <person name="Sebaihia M."/>
            <person name="Preston A."/>
            <person name="Murphy L.D."/>
            <person name="Thomson N.R."/>
            <person name="Harris D.E."/>
            <person name="Holden M.T.G."/>
            <person name="Churcher C.M."/>
            <person name="Bentley S.D."/>
            <person name="Mungall K.L."/>
            <person name="Cerdeno-Tarraga A.-M."/>
            <person name="Temple L."/>
            <person name="James K.D."/>
            <person name="Harris B."/>
            <person name="Quail M.A."/>
            <person name="Achtman M."/>
            <person name="Atkin R."/>
            <person name="Baker S."/>
            <person name="Basham D."/>
            <person name="Bason N."/>
            <person name="Cherevach I."/>
            <person name="Chillingworth T."/>
            <person name="Collins M."/>
            <person name="Cronin A."/>
            <person name="Davis P."/>
            <person name="Doggett J."/>
            <person name="Feltwell T."/>
            <person name="Goble A."/>
            <person name="Hamlin N."/>
            <person name="Hauser H."/>
            <person name="Holroyd S."/>
            <person name="Jagels K."/>
            <person name="Leather S."/>
            <person name="Moule S."/>
            <person name="Norberczak H."/>
            <person name="O'Neil S."/>
            <person name="Ormond D."/>
            <person name="Price C."/>
            <person name="Rabbinowitsch E."/>
            <person name="Rutter S."/>
            <person name="Sanders M."/>
            <person name="Saunders D."/>
            <person name="Seeger K."/>
            <person name="Sharp S."/>
            <person name="Simmonds M."/>
            <person name="Skelton J."/>
            <person name="Squares R."/>
            <person name="Squares S."/>
            <person name="Stevens K."/>
            <person name="Unwin L."/>
            <person name="Whitehead S."/>
            <person name="Barrell B.G."/>
            <person name="Maskell D.J."/>
        </authorList>
    </citation>
    <scope>NUCLEOTIDE SEQUENCE [LARGE SCALE GENOMIC DNA]</scope>
    <source>
        <strain>12822 / ATCC BAA-587 / NCTC 13253</strain>
    </source>
</reference>
<evidence type="ECO:0000255" key="1">
    <source>
        <dbReference type="HAMAP-Rule" id="MF_01527"/>
    </source>
</evidence>
<accession>Q7W7P9</accession>
<name>GCH4_BORPA</name>
<proteinExistence type="inferred from homology"/>
<organism>
    <name type="scientific">Bordetella parapertussis (strain 12822 / ATCC BAA-587 / NCTC 13253)</name>
    <dbReference type="NCBI Taxonomy" id="257311"/>
    <lineage>
        <taxon>Bacteria</taxon>
        <taxon>Pseudomonadati</taxon>
        <taxon>Pseudomonadota</taxon>
        <taxon>Betaproteobacteria</taxon>
        <taxon>Burkholderiales</taxon>
        <taxon>Alcaligenaceae</taxon>
        <taxon>Bordetella</taxon>
    </lineage>
</organism>
<feature type="chain" id="PRO_0000147704" description="GTP cyclohydrolase FolE2">
    <location>
        <begin position="1"/>
        <end position="265"/>
    </location>
</feature>
<feature type="site" description="May be catalytically important" evidence="1">
    <location>
        <position position="156"/>
    </location>
</feature>
<gene>
    <name evidence="1" type="primary">folE2</name>
    <name type="ordered locus">BPP2465</name>
</gene>
<keyword id="KW-0378">Hydrolase</keyword>
<sequence>MNSPIDPAIVMPDVQSSTDTRHIPIQRVGIRGVRHPMLVLAGDGAAQPTVANWTLTVALPAEEKGTHMSRFVALLEKYRATPMTPALFAAMAREMLPLLHAERGDITASFPYFINKSAPVSGVQSLLDYEMQWIARAVGEQVEFELVAQVPVTSLCPCSKAISEYGAHNQRSHVTVSAIVDGDFRMDELIRLVEDEASCELWGLLKRPDEKYVTERAYDNPKFVEDLVRDVAARLKAHPGIGRFRVEAENFESIHNHSAYAVVEG</sequence>
<dbReference type="EC" id="3.5.4.16" evidence="1"/>
<dbReference type="EMBL" id="BX640430">
    <property type="protein sequence ID" value="CAE37760.1"/>
    <property type="molecule type" value="Genomic_DNA"/>
</dbReference>
<dbReference type="RefSeq" id="WP_003813103.1">
    <property type="nucleotide sequence ID" value="NC_002928.3"/>
</dbReference>
<dbReference type="SMR" id="Q7W7P9"/>
<dbReference type="GeneID" id="93204249"/>
<dbReference type="KEGG" id="bpa:BPP2465"/>
<dbReference type="HOGENOM" id="CLU_062816_1_1_4"/>
<dbReference type="UniPathway" id="UPA00848">
    <property type="reaction ID" value="UER00151"/>
</dbReference>
<dbReference type="Proteomes" id="UP000001421">
    <property type="component" value="Chromosome"/>
</dbReference>
<dbReference type="GO" id="GO:0003934">
    <property type="term" value="F:GTP cyclohydrolase I activity"/>
    <property type="evidence" value="ECO:0007669"/>
    <property type="project" value="UniProtKB-UniRule"/>
</dbReference>
<dbReference type="GO" id="GO:0046654">
    <property type="term" value="P:tetrahydrofolate biosynthetic process"/>
    <property type="evidence" value="ECO:0007669"/>
    <property type="project" value="UniProtKB-UniRule"/>
</dbReference>
<dbReference type="Gene3D" id="3.10.270.10">
    <property type="entry name" value="Urate Oxidase"/>
    <property type="match status" value="1"/>
</dbReference>
<dbReference type="HAMAP" id="MF_01527_B">
    <property type="entry name" value="GTP_cyclohydrol_B"/>
    <property type="match status" value="1"/>
</dbReference>
<dbReference type="InterPro" id="IPR022838">
    <property type="entry name" value="GTP_cyclohydrolase_FolE2"/>
</dbReference>
<dbReference type="InterPro" id="IPR003801">
    <property type="entry name" value="GTP_cyclohydrolase_FolE2/MptA"/>
</dbReference>
<dbReference type="NCBIfam" id="NF010200">
    <property type="entry name" value="PRK13674.1-1"/>
    <property type="match status" value="1"/>
</dbReference>
<dbReference type="PANTHER" id="PTHR36445">
    <property type="entry name" value="GTP CYCLOHYDROLASE MPTA"/>
    <property type="match status" value="1"/>
</dbReference>
<dbReference type="PANTHER" id="PTHR36445:SF1">
    <property type="entry name" value="GTP CYCLOHYDROLASE MPTA"/>
    <property type="match status" value="1"/>
</dbReference>
<dbReference type="Pfam" id="PF02649">
    <property type="entry name" value="GCHY-1"/>
    <property type="match status" value="1"/>
</dbReference>